<gene>
    <name evidence="3" type="primary">PLD1</name>
</gene>
<dbReference type="EC" id="3.1.4.4" evidence="7"/>
<dbReference type="EMBL" id="ABIM01003647">
    <property type="status" value="NOT_ANNOTATED_CDS"/>
    <property type="molecule type" value="Genomic_DNA"/>
</dbReference>
<dbReference type="SMR" id="P86387"/>
<dbReference type="OrthoDB" id="14911at2759"/>
<dbReference type="GO" id="GO:0005886">
    <property type="term" value="C:plasma membrane"/>
    <property type="evidence" value="ECO:0007669"/>
    <property type="project" value="TreeGrafter"/>
</dbReference>
<dbReference type="GO" id="GO:0005509">
    <property type="term" value="F:calcium ion binding"/>
    <property type="evidence" value="ECO:0007669"/>
    <property type="project" value="InterPro"/>
</dbReference>
<dbReference type="GO" id="GO:0004630">
    <property type="term" value="F:phospholipase D activity"/>
    <property type="evidence" value="ECO:0007669"/>
    <property type="project" value="UniProtKB-EC"/>
</dbReference>
<dbReference type="GO" id="GO:0034638">
    <property type="term" value="P:phosphatidylcholine catabolic process"/>
    <property type="evidence" value="ECO:0000314"/>
    <property type="project" value="UniProtKB"/>
</dbReference>
<dbReference type="CDD" id="cd04015">
    <property type="entry name" value="C2_plant_PLD"/>
    <property type="match status" value="1"/>
</dbReference>
<dbReference type="CDD" id="cd09197">
    <property type="entry name" value="PLDc_pPLDalpha_1"/>
    <property type="match status" value="1"/>
</dbReference>
<dbReference type="CDD" id="cd09199">
    <property type="entry name" value="PLDc_pPLDalpha_2"/>
    <property type="match status" value="1"/>
</dbReference>
<dbReference type="FunFam" id="3.30.870.10:FF:000027">
    <property type="entry name" value="Phospholipase D"/>
    <property type="match status" value="1"/>
</dbReference>
<dbReference type="FunFam" id="2.60.40.150:FF:000266">
    <property type="entry name" value="Phospholipase D alpha 1"/>
    <property type="match status" value="1"/>
</dbReference>
<dbReference type="FunFam" id="3.30.870.10:FF:000025">
    <property type="entry name" value="Phospholipase D delta"/>
    <property type="match status" value="1"/>
</dbReference>
<dbReference type="Gene3D" id="2.60.40.150">
    <property type="entry name" value="C2 domain"/>
    <property type="match status" value="1"/>
</dbReference>
<dbReference type="Gene3D" id="3.30.870.10">
    <property type="entry name" value="Endonuclease Chain A"/>
    <property type="match status" value="2"/>
</dbReference>
<dbReference type="InterPro" id="IPR000008">
    <property type="entry name" value="C2_dom"/>
</dbReference>
<dbReference type="InterPro" id="IPR035892">
    <property type="entry name" value="C2_domain_sf"/>
</dbReference>
<dbReference type="InterPro" id="IPR001736">
    <property type="entry name" value="PLipase_D/transphosphatidylase"/>
</dbReference>
<dbReference type="InterPro" id="IPR024632">
    <property type="entry name" value="PLipase_D_C"/>
</dbReference>
<dbReference type="InterPro" id="IPR015679">
    <property type="entry name" value="PLipase_D_fam"/>
</dbReference>
<dbReference type="InterPro" id="IPR011402">
    <property type="entry name" value="PLipase_D_pln"/>
</dbReference>
<dbReference type="PANTHER" id="PTHR18896">
    <property type="entry name" value="PHOSPHOLIPASE D"/>
    <property type="match status" value="1"/>
</dbReference>
<dbReference type="PANTHER" id="PTHR18896:SF115">
    <property type="entry name" value="PHOSPHOLIPASE D ALPHA 1"/>
    <property type="match status" value="1"/>
</dbReference>
<dbReference type="Pfam" id="PF00168">
    <property type="entry name" value="C2"/>
    <property type="match status" value="1"/>
</dbReference>
<dbReference type="Pfam" id="PF12357">
    <property type="entry name" value="PLD_C"/>
    <property type="match status" value="1"/>
</dbReference>
<dbReference type="Pfam" id="PF00614">
    <property type="entry name" value="PLDc"/>
    <property type="match status" value="2"/>
</dbReference>
<dbReference type="PIRSF" id="PIRSF036470">
    <property type="entry name" value="PLD_plant"/>
    <property type="match status" value="1"/>
</dbReference>
<dbReference type="SMART" id="SM00239">
    <property type="entry name" value="C2"/>
    <property type="match status" value="1"/>
</dbReference>
<dbReference type="SMART" id="SM00155">
    <property type="entry name" value="PLDc"/>
    <property type="match status" value="2"/>
</dbReference>
<dbReference type="SUPFAM" id="SSF49562">
    <property type="entry name" value="C2 domain (Calcium/lipid-binding domain, CaLB)"/>
    <property type="match status" value="1"/>
</dbReference>
<dbReference type="SUPFAM" id="SSF56024">
    <property type="entry name" value="Phospholipase D/nuclease"/>
    <property type="match status" value="2"/>
</dbReference>
<dbReference type="PROSITE" id="PS50004">
    <property type="entry name" value="C2"/>
    <property type="match status" value="1"/>
</dbReference>
<dbReference type="PROSITE" id="PS50035">
    <property type="entry name" value="PLD"/>
    <property type="match status" value="2"/>
</dbReference>
<name>PLDA1_CARPA</name>
<reference evidence="9" key="1">
    <citation type="journal article" date="2008" name="Nature">
        <title>The draft genome of the transgenic tropical fruit tree papaya (Carica papaya Linnaeus).</title>
        <authorList>
            <person name="Ming R."/>
            <person name="Hou S."/>
            <person name="Feng Y."/>
            <person name="Yu Q."/>
            <person name="Dionne-Laporte A."/>
            <person name="Saw J.H."/>
            <person name="Senin P."/>
            <person name="Wang W."/>
            <person name="Ly B.V."/>
            <person name="Lewis K.L."/>
            <person name="Salzberg S.L."/>
            <person name="Feng L."/>
            <person name="Jones M.R."/>
            <person name="Skelton R.L."/>
            <person name="Murray J.E."/>
            <person name="Chen C."/>
            <person name="Qian W."/>
            <person name="Shen J."/>
            <person name="Du P."/>
            <person name="Eustice M."/>
            <person name="Tong E."/>
            <person name="Tang H."/>
            <person name="Lyons E."/>
            <person name="Paull R.E."/>
            <person name="Michael T.P."/>
            <person name="Wall K."/>
            <person name="Rice D.W."/>
            <person name="Albert H."/>
            <person name="Wang M.L."/>
            <person name="Zhu Y.J."/>
            <person name="Schatz M."/>
            <person name="Nagarajan N."/>
            <person name="Acob R.A."/>
            <person name="Guan P."/>
            <person name="Blas A."/>
            <person name="Wai C.M."/>
            <person name="Ackerman C.M."/>
            <person name="Ren Y."/>
            <person name="Liu C."/>
            <person name="Wang J."/>
            <person name="Wang J."/>
            <person name="Na J.K."/>
            <person name="Shakirov E.V."/>
            <person name="Haas B."/>
            <person name="Thimmapuram J."/>
            <person name="Nelson D."/>
            <person name="Wang X."/>
            <person name="Bowers J.E."/>
            <person name="Gschwend A.R."/>
            <person name="Delcher A.L."/>
            <person name="Singh R."/>
            <person name="Suzuki J.Y."/>
            <person name="Tripathi S."/>
            <person name="Neupane K."/>
            <person name="Wei H."/>
            <person name="Irikura B."/>
            <person name="Paidi M."/>
            <person name="Jiang N."/>
            <person name="Zhang W."/>
            <person name="Presting G."/>
            <person name="Windsor A."/>
            <person name="Navajas-Perez R."/>
            <person name="Torres M.J."/>
            <person name="Feltus F.A."/>
            <person name="Porter B."/>
            <person name="Li Y."/>
            <person name="Burroughs A.M."/>
            <person name="Luo M.C."/>
            <person name="Liu L."/>
            <person name="Christopher D.A."/>
            <person name="Mount S.M."/>
            <person name="Moore P.H."/>
            <person name="Sugimura T."/>
            <person name="Jiang J."/>
            <person name="Schuler M.A."/>
            <person name="Friedman V."/>
            <person name="Mitchell-Olds T."/>
            <person name="Shippen D.E."/>
            <person name="dePamphilis C.W."/>
            <person name="Palmer J.D."/>
            <person name="Freeling M."/>
            <person name="Paterson A.H."/>
            <person name="Gonsalves D."/>
            <person name="Wang L."/>
            <person name="Alam M."/>
        </authorList>
    </citation>
    <scope>NUCLEOTIDE SEQUENCE [LARGE SCALE GENOMIC DNA]</scope>
    <source>
        <strain evidence="9">cv. SunUp</strain>
    </source>
</reference>
<reference evidence="9" key="2">
    <citation type="journal article" date="2012" name="Gene">
        <title>Identification of a new phospholipase D in Carica papaya latex.</title>
        <authorList>
            <person name="Abdelkafi S."/>
            <person name="Abousalham A."/>
            <person name="Fendri I."/>
            <person name="Ogata H."/>
            <person name="Barouh N."/>
            <person name="Fouquet B."/>
            <person name="Scheirlinckx F."/>
            <person name="Villeneuve P."/>
            <person name="Carriere F."/>
        </authorList>
    </citation>
    <scope>PROTEIN SEQUENCE OF 401-425; 467-509 AND 537-547</scope>
    <scope>CATALYTIC ACTIVITY</scope>
    <source>
        <tissue evidence="7">Latex</tissue>
    </source>
</reference>
<organism>
    <name type="scientific">Carica papaya</name>
    <name type="common">Papaya</name>
    <dbReference type="NCBI Taxonomy" id="3649"/>
    <lineage>
        <taxon>Eukaryota</taxon>
        <taxon>Viridiplantae</taxon>
        <taxon>Streptophyta</taxon>
        <taxon>Embryophyta</taxon>
        <taxon>Tracheophyta</taxon>
        <taxon>Spermatophyta</taxon>
        <taxon>Magnoliopsida</taxon>
        <taxon>eudicotyledons</taxon>
        <taxon>Gunneridae</taxon>
        <taxon>Pentapetalae</taxon>
        <taxon>rosids</taxon>
        <taxon>malvids</taxon>
        <taxon>Brassicales</taxon>
        <taxon>Caricaceae</taxon>
        <taxon>Carica</taxon>
    </lineage>
</organism>
<feature type="chain" id="PRO_0000419018" description="Phospholipase D alpha 1">
    <location>
        <begin position="1"/>
        <end position="808"/>
    </location>
</feature>
<feature type="domain" description="C2" evidence="5">
    <location>
        <begin position="1"/>
        <end position="125"/>
    </location>
</feature>
<feature type="domain" description="PLD phosphodiesterase 1" evidence="6">
    <location>
        <begin position="326"/>
        <end position="364"/>
    </location>
</feature>
<feature type="domain" description="PLD phosphodiesterase 2" evidence="6">
    <location>
        <begin position="654"/>
        <end position="681"/>
    </location>
</feature>
<feature type="active site" evidence="6">
    <location>
        <position position="331"/>
    </location>
</feature>
<feature type="active site" evidence="6">
    <location>
        <position position="333"/>
    </location>
</feature>
<feature type="active site" evidence="6">
    <location>
        <position position="338"/>
    </location>
</feature>
<feature type="active site" evidence="6">
    <location>
        <position position="659"/>
    </location>
</feature>
<feature type="active site" evidence="6">
    <location>
        <position position="661"/>
    </location>
</feature>
<feature type="active site" evidence="6">
    <location>
        <position position="666"/>
    </location>
</feature>
<feature type="binding site" evidence="2">
    <location>
        <position position="186"/>
    </location>
    <ligand>
        <name>Ca(2+)</name>
        <dbReference type="ChEBI" id="CHEBI:29108"/>
    </ligand>
</feature>
<feature type="binding site" evidence="2">
    <location>
        <position position="331"/>
    </location>
    <ligand>
        <name>a 1,2-diacyl-sn-glycero-3-phosphate</name>
        <dbReference type="ChEBI" id="CHEBI:58608"/>
    </ligand>
</feature>
<feature type="binding site" evidence="2">
    <location>
        <position position="370"/>
    </location>
    <ligand>
        <name>Ca(2+)</name>
        <dbReference type="ChEBI" id="CHEBI:29108"/>
    </ligand>
</feature>
<feature type="binding site" evidence="2">
    <location>
        <position position="404"/>
    </location>
    <ligand>
        <name>Ca(2+)</name>
        <dbReference type="ChEBI" id="CHEBI:29108"/>
    </ligand>
</feature>
<feature type="binding site" evidence="2">
    <location>
        <position position="520"/>
    </location>
    <ligand>
        <name>a 1,2-diacyl-sn-glycero-3-phosphate</name>
        <dbReference type="ChEBI" id="CHEBI:58608"/>
    </ligand>
</feature>
<feature type="binding site" evidence="2">
    <location>
        <position position="659"/>
    </location>
    <ligand>
        <name>a 1,2-diacyl-sn-glycero-3-phosphate</name>
        <dbReference type="ChEBI" id="CHEBI:58608"/>
    </ligand>
</feature>
<feature type="binding site" evidence="2">
    <location>
        <position position="720"/>
    </location>
    <ligand>
        <name>Ca(2+)</name>
        <dbReference type="ChEBI" id="CHEBI:29108"/>
    </ligand>
</feature>
<proteinExistence type="evidence at protein level"/>
<accession>P86387</accession>
<sequence length="808" mass="92037">MAHYLMHGTLHATVYEVDKLHSGGISGFFGKILANVEGTIGIGKGVTQLYATIDLERARVGRTRIIKDEPNNPKWYESFHIYCAHMASNVVFTVKDDNPIGATLIGRAYVPVEELIRGDQVDRWVEILDEDKNPIEGDSKIHVKLQFFDVKKDSNWNMGIKGARYLGVPYTFYSQRRGCRVSLYQDAHVPDGFIPKIPLAGGKYYEPHRCWEDVFDAITNARHLIYITGWSVYTEITLIRDSRRPKPGGDVTLGELLKQKASEGVKVLMLVWDDRTSVGLLKKDGLMATHDEETANYFQNTDVHCVLCPRNPDDGGSFVQGLQISTMFTHHQKIVVVDGEMPSGESQMRRIVSFVGGIDLCDGRYDTPFHSLFRTLDTAHHDDFHQPNFAGSSITKGGPREPWHDIHSRLEGPVAWDVLFNFEQRWRQQGGKDVLVNLRELDNIIIPPSPVMFPDDHETWNVQLFRSIDGGAAFGFPETPEEAARAGLVSGKDNIIDRSIQDAYINAIRRAKNFIYIENQYFLGSSFDWSSDDIKREDINALHLIPKELSLKIVSKIERGERFTVYVVVPMWPEGVPESASVQAILDWQRRTMEMMYKDIIQALRAKDREEDPRNYLTFFCLGNREVKKSGEYEPSERPEDDSDYIRAQEARRFMIYVHTKMMIVDDEYIIVGSANINQRSMDGARDSEIAMGAYQPYHLTINQPARGQIHGFRMALWYEHLGMLDDTFLEPENIECVQKVNRVAGKYWDLYASELLEHDLPGHLLRYPIGVSSEGDVTELPGTEFFPDTKARVLGAKSDYLPPILTT</sequence>
<keyword id="KW-0106">Calcium</keyword>
<keyword id="KW-0903">Direct protein sequencing</keyword>
<keyword id="KW-0378">Hydrolase</keyword>
<keyword id="KW-0442">Lipid degradation</keyword>
<keyword id="KW-0443">Lipid metabolism</keyword>
<keyword id="KW-0479">Metal-binding</keyword>
<keyword id="KW-0677">Repeat</keyword>
<evidence type="ECO:0000250" key="1">
    <source>
        <dbReference type="UniProtKB" id="P55939"/>
    </source>
</evidence>
<evidence type="ECO:0000250" key="2">
    <source>
        <dbReference type="UniProtKB" id="Q38882"/>
    </source>
</evidence>
<evidence type="ECO:0000250" key="3">
    <source>
        <dbReference type="UniProtKB" id="Q41142"/>
    </source>
</evidence>
<evidence type="ECO:0000255" key="4"/>
<evidence type="ECO:0000255" key="5">
    <source>
        <dbReference type="PROSITE-ProRule" id="PRU00041"/>
    </source>
</evidence>
<evidence type="ECO:0000255" key="6">
    <source>
        <dbReference type="PROSITE-ProRule" id="PRU00153"/>
    </source>
</evidence>
<evidence type="ECO:0000269" key="7">
    <source>
    </source>
</evidence>
<evidence type="ECO:0000303" key="8">
    <source>
    </source>
</evidence>
<evidence type="ECO:0000305" key="9"/>
<protein>
    <recommendedName>
        <fullName evidence="3">Phospholipase D alpha 1</fullName>
        <shortName evidence="8">CpPLD1</shortName>
        <ecNumber evidence="7">3.1.4.4</ecNumber>
    </recommendedName>
    <alternativeName>
        <fullName evidence="3">Choline phosphatase 1</fullName>
    </alternativeName>
    <alternativeName>
        <fullName evidence="3">Phosphatidylcholine-hydrolyzing phospholipase D 1</fullName>
    </alternativeName>
</protein>
<comment type="function">
    <text evidence="1">Hydrolyzes glycerol-phospholipids at the terminal phosphodiesteric bond. Plays an important role in various cellular processes (By similarity).</text>
</comment>
<comment type="catalytic activity">
    <reaction evidence="7">
        <text>a 1,2-diacyl-sn-glycero-3-phosphocholine + H2O = a 1,2-diacyl-sn-glycero-3-phosphate + choline + H(+)</text>
        <dbReference type="Rhea" id="RHEA:14445"/>
        <dbReference type="ChEBI" id="CHEBI:15354"/>
        <dbReference type="ChEBI" id="CHEBI:15377"/>
        <dbReference type="ChEBI" id="CHEBI:15378"/>
        <dbReference type="ChEBI" id="CHEBI:57643"/>
        <dbReference type="ChEBI" id="CHEBI:58608"/>
        <dbReference type="EC" id="3.1.4.4"/>
    </reaction>
</comment>
<comment type="cofactor">
    <cofactor evidence="1">
        <name>Ca(2+)</name>
        <dbReference type="ChEBI" id="CHEBI:29108"/>
    </cofactor>
    <text evidence="1">Ca(2+) requirement for activity depends on pH. Active either under acidic conditions with micromolar levels of calcium (PIP2-dependent) or at neutral pH with millimolar levels of calcium (PIP2-independent).</text>
</comment>
<comment type="domain">
    <text evidence="1">C2 domain is a calcium-binding fold, and the binding promotes the protein association with membranes. A lower affinity toward calcium can be anticipated for PLD alpha due to the absence of two potential calcium ligands (By similarity).</text>
</comment>
<comment type="similarity">
    <text evidence="4">Belongs to the phospholipase D family. C2-PLD subfamily.</text>
</comment>